<keyword id="KW-0963">Cytoplasm</keyword>
<keyword id="KW-0378">Hydrolase</keyword>
<keyword id="KW-0645">Protease</keyword>
<keyword id="KW-0720">Serine protease</keyword>
<sequence>MITNNLVPTVIEKTAGGERAFDIYSRLLKERIVFLNGEVNDHSANLVIAQLLFLESEDPDKDIYFYINSPGGMVTAGMGVYDTMQFIKPDVSTICIGLAASMGSLLLAGGAKGKRYSLPSSQIMIHQPLGGFRGQASDIEIHAKNILRIKDRLNKVLAHHTGQDLETIVKDTDRDNFMMADEAKAYGLIDHVIESREAIIK</sequence>
<evidence type="ECO:0000255" key="1">
    <source>
        <dbReference type="HAMAP-Rule" id="MF_00444"/>
    </source>
</evidence>
<accession>Q0BM92</accession>
<reference key="1">
    <citation type="journal article" date="2006" name="J. Bacteriol.">
        <title>Chromosome rearrangement and diversification of Francisella tularensis revealed by the type B (OSU18) genome sequence.</title>
        <authorList>
            <person name="Petrosino J.F."/>
            <person name="Xiang Q."/>
            <person name="Karpathy S.E."/>
            <person name="Jiang H."/>
            <person name="Yerrapragada S."/>
            <person name="Liu Y."/>
            <person name="Gioia J."/>
            <person name="Hemphill L."/>
            <person name="Gonzalez A."/>
            <person name="Raghavan T.M."/>
            <person name="Uzman A."/>
            <person name="Fox G.E."/>
            <person name="Highlander S."/>
            <person name="Reichard M."/>
            <person name="Morton R.J."/>
            <person name="Clinkenbeard K.D."/>
            <person name="Weinstock G.M."/>
        </authorList>
    </citation>
    <scope>NUCLEOTIDE SEQUENCE [LARGE SCALE GENOMIC DNA]</scope>
    <source>
        <strain>OSU18</strain>
    </source>
</reference>
<protein>
    <recommendedName>
        <fullName evidence="1">ATP-dependent Clp protease proteolytic subunit</fullName>
        <ecNumber evidence="1">3.4.21.92</ecNumber>
    </recommendedName>
    <alternativeName>
        <fullName evidence="1">Endopeptidase Clp</fullName>
    </alternativeName>
</protein>
<comment type="function">
    <text evidence="1">Cleaves peptides in various proteins in a process that requires ATP hydrolysis. Has a chymotrypsin-like activity. Plays a major role in the degradation of misfolded proteins.</text>
</comment>
<comment type="catalytic activity">
    <reaction evidence="1">
        <text>Hydrolysis of proteins to small peptides in the presence of ATP and magnesium. alpha-casein is the usual test substrate. In the absence of ATP, only oligopeptides shorter than five residues are hydrolyzed (such as succinyl-Leu-Tyr-|-NHMec, and Leu-Tyr-Leu-|-Tyr-Trp, in which cleavage of the -Tyr-|-Leu- and -Tyr-|-Trp bonds also occurs).</text>
        <dbReference type="EC" id="3.4.21.92"/>
    </reaction>
</comment>
<comment type="subunit">
    <text evidence="1">Fourteen ClpP subunits assemble into 2 heptameric rings which stack back to back to give a disk-like structure with a central cavity, resembling the structure of eukaryotic proteasomes.</text>
</comment>
<comment type="subcellular location">
    <subcellularLocation>
        <location evidence="1">Cytoplasm</location>
    </subcellularLocation>
</comment>
<comment type="similarity">
    <text evidence="1">Belongs to the peptidase S14 family.</text>
</comment>
<dbReference type="EC" id="3.4.21.92" evidence="1"/>
<dbReference type="EMBL" id="CP000437">
    <property type="protein sequence ID" value="ABI82792.1"/>
    <property type="molecule type" value="Genomic_DNA"/>
</dbReference>
<dbReference type="RefSeq" id="WP_003015534.1">
    <property type="nucleotide sequence ID" value="NC_017463.1"/>
</dbReference>
<dbReference type="SMR" id="Q0BM92"/>
<dbReference type="MEROPS" id="S14.001"/>
<dbReference type="GeneID" id="75265209"/>
<dbReference type="KEGG" id="fth:FTH_0877"/>
<dbReference type="GO" id="GO:0005737">
    <property type="term" value="C:cytoplasm"/>
    <property type="evidence" value="ECO:0007669"/>
    <property type="project" value="UniProtKB-SubCell"/>
</dbReference>
<dbReference type="GO" id="GO:0009368">
    <property type="term" value="C:endopeptidase Clp complex"/>
    <property type="evidence" value="ECO:0007669"/>
    <property type="project" value="TreeGrafter"/>
</dbReference>
<dbReference type="GO" id="GO:0004176">
    <property type="term" value="F:ATP-dependent peptidase activity"/>
    <property type="evidence" value="ECO:0007669"/>
    <property type="project" value="InterPro"/>
</dbReference>
<dbReference type="GO" id="GO:0051117">
    <property type="term" value="F:ATPase binding"/>
    <property type="evidence" value="ECO:0007669"/>
    <property type="project" value="TreeGrafter"/>
</dbReference>
<dbReference type="GO" id="GO:0004252">
    <property type="term" value="F:serine-type endopeptidase activity"/>
    <property type="evidence" value="ECO:0007669"/>
    <property type="project" value="UniProtKB-UniRule"/>
</dbReference>
<dbReference type="GO" id="GO:0006515">
    <property type="term" value="P:protein quality control for misfolded or incompletely synthesized proteins"/>
    <property type="evidence" value="ECO:0007669"/>
    <property type="project" value="TreeGrafter"/>
</dbReference>
<dbReference type="CDD" id="cd07017">
    <property type="entry name" value="S14_ClpP_2"/>
    <property type="match status" value="1"/>
</dbReference>
<dbReference type="FunFam" id="3.90.226.10:FF:000001">
    <property type="entry name" value="ATP-dependent Clp protease proteolytic subunit"/>
    <property type="match status" value="1"/>
</dbReference>
<dbReference type="Gene3D" id="3.90.226.10">
    <property type="entry name" value="2-enoyl-CoA Hydratase, Chain A, domain 1"/>
    <property type="match status" value="1"/>
</dbReference>
<dbReference type="HAMAP" id="MF_00444">
    <property type="entry name" value="ClpP"/>
    <property type="match status" value="1"/>
</dbReference>
<dbReference type="InterPro" id="IPR001907">
    <property type="entry name" value="ClpP"/>
</dbReference>
<dbReference type="InterPro" id="IPR029045">
    <property type="entry name" value="ClpP/crotonase-like_dom_sf"/>
</dbReference>
<dbReference type="InterPro" id="IPR023562">
    <property type="entry name" value="ClpP/TepA"/>
</dbReference>
<dbReference type="InterPro" id="IPR033135">
    <property type="entry name" value="ClpP_His_AS"/>
</dbReference>
<dbReference type="InterPro" id="IPR018215">
    <property type="entry name" value="ClpP_Ser_AS"/>
</dbReference>
<dbReference type="NCBIfam" id="TIGR00493">
    <property type="entry name" value="clpP"/>
    <property type="match status" value="1"/>
</dbReference>
<dbReference type="NCBIfam" id="NF001368">
    <property type="entry name" value="PRK00277.1"/>
    <property type="match status" value="1"/>
</dbReference>
<dbReference type="NCBIfam" id="NF009205">
    <property type="entry name" value="PRK12553.1"/>
    <property type="match status" value="1"/>
</dbReference>
<dbReference type="PANTHER" id="PTHR10381">
    <property type="entry name" value="ATP-DEPENDENT CLP PROTEASE PROTEOLYTIC SUBUNIT"/>
    <property type="match status" value="1"/>
</dbReference>
<dbReference type="PANTHER" id="PTHR10381:SF70">
    <property type="entry name" value="ATP-DEPENDENT CLP PROTEASE PROTEOLYTIC SUBUNIT"/>
    <property type="match status" value="1"/>
</dbReference>
<dbReference type="Pfam" id="PF00574">
    <property type="entry name" value="CLP_protease"/>
    <property type="match status" value="1"/>
</dbReference>
<dbReference type="PRINTS" id="PR00127">
    <property type="entry name" value="CLPPROTEASEP"/>
</dbReference>
<dbReference type="SUPFAM" id="SSF52096">
    <property type="entry name" value="ClpP/crotonase"/>
    <property type="match status" value="1"/>
</dbReference>
<dbReference type="PROSITE" id="PS00382">
    <property type="entry name" value="CLP_PROTEASE_HIS"/>
    <property type="match status" value="1"/>
</dbReference>
<dbReference type="PROSITE" id="PS00381">
    <property type="entry name" value="CLP_PROTEASE_SER"/>
    <property type="match status" value="1"/>
</dbReference>
<organism>
    <name type="scientific">Francisella tularensis subsp. holarctica (strain OSU18)</name>
    <dbReference type="NCBI Taxonomy" id="393011"/>
    <lineage>
        <taxon>Bacteria</taxon>
        <taxon>Pseudomonadati</taxon>
        <taxon>Pseudomonadota</taxon>
        <taxon>Gammaproteobacteria</taxon>
        <taxon>Thiotrichales</taxon>
        <taxon>Francisellaceae</taxon>
        <taxon>Francisella</taxon>
    </lineage>
</organism>
<proteinExistence type="inferred from homology"/>
<gene>
    <name evidence="1" type="primary">clpP</name>
    <name type="ordered locus">FTH_0877</name>
</gene>
<name>CLPP_FRATO</name>
<feature type="chain" id="PRO_1000026094" description="ATP-dependent Clp protease proteolytic subunit">
    <location>
        <begin position="1"/>
        <end position="201"/>
    </location>
</feature>
<feature type="active site" description="Nucleophile" evidence="1">
    <location>
        <position position="101"/>
    </location>
</feature>
<feature type="active site" evidence="1">
    <location>
        <position position="126"/>
    </location>
</feature>